<proteinExistence type="inferred from homology"/>
<reference key="1">
    <citation type="journal article" date="1998" name="Science">
        <title>Genome sequence of the nematode C. elegans: a platform for investigating biology.</title>
        <authorList>
            <consortium name="The C. elegans sequencing consortium"/>
        </authorList>
    </citation>
    <scope>NUCLEOTIDE SEQUENCE [LARGE SCALE GENOMIC DNA]</scope>
    <source>
        <strain>Bristol N2</strain>
    </source>
</reference>
<keyword id="KW-0175">Coiled coil</keyword>
<keyword id="KW-0268">Exocytosis</keyword>
<keyword id="KW-0653">Protein transport</keyword>
<keyword id="KW-1185">Reference proteome</keyword>
<keyword id="KW-0813">Transport</keyword>
<comment type="function">
    <text evidence="1">Component of the exocyst complex involved in the docking of exocytic vesicles with fusion sites on the plasma membrane.</text>
</comment>
<comment type="subunit">
    <text evidence="1">The exocyst complex is composed of sec-3/exoc1, sec-5/exoc2, sec-6/exoc3, sec-8/exoc4, sec-10/exoc5, sec-15/exoc6, exo-70/exoc7 and exo-84/exoc8.</text>
</comment>
<comment type="similarity">
    <text evidence="3">Belongs to the SEC15 family.</text>
</comment>
<evidence type="ECO:0000250" key="1"/>
<evidence type="ECO:0000255" key="2"/>
<evidence type="ECO:0000305" key="3"/>
<name>EXOC6_CAEEL</name>
<gene>
    <name type="primary">sec-15</name>
    <name type="ORF">C28G1.3</name>
</gene>
<sequence length="817" mass="93879">MPNSSSTSQPATTGSETASTSYVNYVEMSAEQEYFLYELETTDSGSMGLVLRAIYDTGDVQSFARALQQRISHYDKNIQKVCSFHYQSFVDAMQELMKLKEQCQDIKEETVAIDAEIQQISQRLCQKKQEIVRYRKLMKNAKTAMDQIAVCLPVLENYAKLQEQMSNRKYYQALKTLEELEHTHLALVEKYRFTQVLAKSMAPVRLEIKEKAYSEFKDFLENIKKVAGRIGKHASKDTAEQHSFGVTDAERAKKIQEEARKNASNVEIEVSADGSIVKKNMSPKRNMKMQVEDDEQVSAQDLIDFTPVHRCCQIFNVLGAKEEFEQYYRQQRKEQCDLVIEPTHKMNNFKHYVEYLDEIVGFFVVEDQILMTQSNLSTTVDKDKLWDNALMKIRQHLDARFGGSPDVLMMLKMKKVILLFILTMKSYGYAVAPLYELLQNFRDQYNEILVKEYCAQFERDLEKDNYTPITVNSEEEFRTIIRKFPFYKRSMEQEPFPRRFPFSPFVTDAYTQAKNYLIGCLKFMDNLQLNTSAVDDTVRRCANVLLGRWAGVLKSFVHKRLSMIQLVQITINLGYLEKSCESLGAFITSKTSGEEAIGTTSHQVVLSEKVFRDVRSEVEQQIDECMRSKVDEIIDLANYDWELPAAAGQASEFISDLINFLQTTFTSFTNLPSGLAKHVCTQTCKHISQSMSDFLLSPETKCISTGALDQFSLDVMQCEMFTTRCPVAGVDPQTLSMTFADLRQLLDLVMSSDWTTFNAEYGKDHAKYLRVKASTAIVVLEKMIEFERKSTGFFGIAKGDRKKLLDTIVRQLKLLEI</sequence>
<feature type="chain" id="PRO_0000118955" description="Exocyst complex component 6">
    <location>
        <begin position="1"/>
        <end position="817"/>
    </location>
</feature>
<feature type="coiled-coil region" evidence="2">
    <location>
        <begin position="87"/>
        <end position="149"/>
    </location>
</feature>
<feature type="coiled-coil region" evidence="2">
    <location>
        <begin position="247"/>
        <end position="270"/>
    </location>
</feature>
<organism>
    <name type="scientific">Caenorhabditis elegans</name>
    <dbReference type="NCBI Taxonomy" id="6239"/>
    <lineage>
        <taxon>Eukaryota</taxon>
        <taxon>Metazoa</taxon>
        <taxon>Ecdysozoa</taxon>
        <taxon>Nematoda</taxon>
        <taxon>Chromadorea</taxon>
        <taxon>Rhabditida</taxon>
        <taxon>Rhabditina</taxon>
        <taxon>Rhabditomorpha</taxon>
        <taxon>Rhabditoidea</taxon>
        <taxon>Rhabditidae</taxon>
        <taxon>Peloderinae</taxon>
        <taxon>Caenorhabditis</taxon>
    </lineage>
</organism>
<dbReference type="EMBL" id="FO080383">
    <property type="protein sequence ID" value="CCD63330.1"/>
    <property type="molecule type" value="Genomic_DNA"/>
</dbReference>
<dbReference type="RefSeq" id="NP_509496.3">
    <property type="nucleotide sequence ID" value="NM_077095.6"/>
</dbReference>
<dbReference type="SMR" id="Q18286"/>
<dbReference type="BioGRID" id="46050">
    <property type="interactions" value="1"/>
</dbReference>
<dbReference type="ComplexPortal" id="CPX-712">
    <property type="entry name" value="Exocyst"/>
</dbReference>
<dbReference type="FunCoup" id="Q18286">
    <property type="interactions" value="2745"/>
</dbReference>
<dbReference type="IntAct" id="Q18286">
    <property type="interactions" value="1"/>
</dbReference>
<dbReference type="MINT" id="Q18286"/>
<dbReference type="STRING" id="6239.C28G1.3.1"/>
<dbReference type="iPTMnet" id="Q18286"/>
<dbReference type="PaxDb" id="6239-C28G1.3"/>
<dbReference type="PeptideAtlas" id="Q18286"/>
<dbReference type="EnsemblMetazoa" id="C28G1.3.1">
    <property type="protein sequence ID" value="C28G1.3.1"/>
    <property type="gene ID" value="WBGene00016188"/>
</dbReference>
<dbReference type="GeneID" id="181131"/>
<dbReference type="KEGG" id="cel:CELE_C28G1.3"/>
<dbReference type="UCSC" id="C28G1.3">
    <property type="organism name" value="c. elegans"/>
</dbReference>
<dbReference type="AGR" id="WB:WBGene00016188"/>
<dbReference type="CTD" id="181131"/>
<dbReference type="WormBase" id="C28G1.3">
    <property type="protein sequence ID" value="CE37614"/>
    <property type="gene ID" value="WBGene00016188"/>
    <property type="gene designation" value="sec-15"/>
</dbReference>
<dbReference type="eggNOG" id="KOG2176">
    <property type="taxonomic scope" value="Eukaryota"/>
</dbReference>
<dbReference type="GeneTree" id="ENSGT00390000005739"/>
<dbReference type="HOGENOM" id="CLU_009437_0_0_1"/>
<dbReference type="InParanoid" id="Q18286"/>
<dbReference type="OMA" id="FPFHSEQ"/>
<dbReference type="OrthoDB" id="10267033at2759"/>
<dbReference type="PhylomeDB" id="Q18286"/>
<dbReference type="Reactome" id="R-CEL-264876">
    <property type="pathway name" value="Insulin processing"/>
</dbReference>
<dbReference type="Reactome" id="R-CEL-5620916">
    <property type="pathway name" value="VxPx cargo-targeting to cilium"/>
</dbReference>
<dbReference type="PRO" id="PR:Q18286"/>
<dbReference type="Proteomes" id="UP000001940">
    <property type="component" value="Chromosome X"/>
</dbReference>
<dbReference type="Bgee" id="WBGene00016188">
    <property type="expression patterns" value="Expressed in pharyngeal muscle cell (C elegans) and 4 other cell types or tissues"/>
</dbReference>
<dbReference type="GO" id="GO:0000145">
    <property type="term" value="C:exocyst"/>
    <property type="evidence" value="ECO:0000250"/>
    <property type="project" value="WormBase"/>
</dbReference>
<dbReference type="GO" id="GO:0006887">
    <property type="term" value="P:exocytosis"/>
    <property type="evidence" value="ECO:0000318"/>
    <property type="project" value="GO_Central"/>
</dbReference>
<dbReference type="GO" id="GO:0006893">
    <property type="term" value="P:Golgi to plasma membrane transport"/>
    <property type="evidence" value="ECO:0000318"/>
    <property type="project" value="GO_Central"/>
</dbReference>
<dbReference type="GO" id="GO:0006886">
    <property type="term" value="P:intracellular protein transport"/>
    <property type="evidence" value="ECO:0007669"/>
    <property type="project" value="InterPro"/>
</dbReference>
<dbReference type="GO" id="GO:0090522">
    <property type="term" value="P:vesicle tethering involved in exocytosis"/>
    <property type="evidence" value="ECO:0000315"/>
    <property type="project" value="ComplexPortal"/>
</dbReference>
<dbReference type="FunFam" id="1.20.58.670:FF:000002">
    <property type="entry name" value="Exocyst complex component"/>
    <property type="match status" value="1"/>
</dbReference>
<dbReference type="Gene3D" id="1.20.58.670">
    <property type="entry name" value="Dsl1p vesicle tethering complex, Tip20p subunit, domain D"/>
    <property type="match status" value="1"/>
</dbReference>
<dbReference type="Gene3D" id="1.10.357.30">
    <property type="entry name" value="Exocyst complex subunit Sec15 C-terminal domain, N-terminal subdomain"/>
    <property type="match status" value="1"/>
</dbReference>
<dbReference type="InterPro" id="IPR007225">
    <property type="entry name" value="EXOC6/Sec15"/>
</dbReference>
<dbReference type="InterPro" id="IPR046361">
    <property type="entry name" value="EXOC6/Sec15_C"/>
</dbReference>
<dbReference type="InterPro" id="IPR042045">
    <property type="entry name" value="EXOC6/Sec15_C_dom1"/>
</dbReference>
<dbReference type="InterPro" id="IPR048359">
    <property type="entry name" value="EXOC6_Sec15_N"/>
</dbReference>
<dbReference type="InterPro" id="IPR042044">
    <property type="entry name" value="EXOC6PINT-1/Sec15/Tip20_C_dom2"/>
</dbReference>
<dbReference type="PANTHER" id="PTHR12702:SF0">
    <property type="entry name" value="EXOCYST COMPLEX COMPONENT 6"/>
    <property type="match status" value="1"/>
</dbReference>
<dbReference type="PANTHER" id="PTHR12702">
    <property type="entry name" value="SEC15"/>
    <property type="match status" value="1"/>
</dbReference>
<dbReference type="Pfam" id="PF20651">
    <property type="entry name" value="EXOC6_Sec15_N"/>
    <property type="match status" value="1"/>
</dbReference>
<dbReference type="Pfam" id="PF04091">
    <property type="entry name" value="Sec15_C"/>
    <property type="match status" value="1"/>
</dbReference>
<dbReference type="PIRSF" id="PIRSF025007">
    <property type="entry name" value="Sec15"/>
    <property type="match status" value="1"/>
</dbReference>
<protein>
    <recommendedName>
        <fullName>Exocyst complex component 6</fullName>
    </recommendedName>
    <alternativeName>
        <fullName>Exocyst complex component Sec15</fullName>
    </alternativeName>
</protein>
<accession>Q18286</accession>